<evidence type="ECO:0000250" key="1">
    <source>
        <dbReference type="UniProtKB" id="Q8WV93"/>
    </source>
</evidence>
<evidence type="ECO:0000269" key="2">
    <source>
    </source>
</evidence>
<evidence type="ECO:0000303" key="3">
    <source>
    </source>
</evidence>
<evidence type="ECO:0000305" key="4"/>
<evidence type="ECO:0000312" key="5">
    <source>
        <dbReference type="MGI" id="MGI:2148801"/>
    </source>
</evidence>
<proteinExistence type="evidence at protein level"/>
<name>AFG1L_MOUSE</name>
<dbReference type="EC" id="3.6.-.-" evidence="4"/>
<dbReference type="EMBL" id="AF520417">
    <property type="protein sequence ID" value="AAM74227.1"/>
    <property type="molecule type" value="mRNA"/>
</dbReference>
<dbReference type="EMBL" id="AK044595">
    <property type="protein sequence ID" value="BAE20648.1"/>
    <property type="molecule type" value="mRNA"/>
</dbReference>
<dbReference type="EMBL" id="BC089595">
    <property type="protein sequence ID" value="AAH89595.1"/>
    <property type="molecule type" value="mRNA"/>
</dbReference>
<dbReference type="CCDS" id="CCDS23811.1"/>
<dbReference type="RefSeq" id="NP_665686.2">
    <property type="nucleotide sequence ID" value="NM_145743.2"/>
</dbReference>
<dbReference type="FunCoup" id="Q3V384">
    <property type="interactions" value="3474"/>
</dbReference>
<dbReference type="IntAct" id="Q3V384">
    <property type="interactions" value="2"/>
</dbReference>
<dbReference type="STRING" id="10090.ENSMUSP00000036149"/>
<dbReference type="GlyGen" id="Q3V384">
    <property type="glycosylation" value="1 site"/>
</dbReference>
<dbReference type="iPTMnet" id="Q3V384"/>
<dbReference type="PhosphoSitePlus" id="Q3V384"/>
<dbReference type="SwissPalm" id="Q3V384"/>
<dbReference type="PaxDb" id="10090-ENSMUSP00000036149"/>
<dbReference type="PeptideAtlas" id="Q3V384"/>
<dbReference type="ProteomicsDB" id="282029"/>
<dbReference type="Pumba" id="Q3V384"/>
<dbReference type="Antibodypedia" id="32213">
    <property type="antibodies" value="167 antibodies from 21 providers"/>
</dbReference>
<dbReference type="DNASU" id="215951"/>
<dbReference type="Ensembl" id="ENSMUST00000041024.15">
    <property type="protein sequence ID" value="ENSMUSP00000036149.9"/>
    <property type="gene ID" value="ENSMUSG00000038302.15"/>
</dbReference>
<dbReference type="GeneID" id="215951"/>
<dbReference type="KEGG" id="mmu:215951"/>
<dbReference type="UCSC" id="uc007eyq.1">
    <property type="organism name" value="mouse"/>
</dbReference>
<dbReference type="AGR" id="MGI:2148801"/>
<dbReference type="CTD" id="246269"/>
<dbReference type="MGI" id="MGI:2148801">
    <property type="gene designation" value="Afg1l"/>
</dbReference>
<dbReference type="VEuPathDB" id="HostDB:ENSMUSG00000038302"/>
<dbReference type="eggNOG" id="KOG2383">
    <property type="taxonomic scope" value="Eukaryota"/>
</dbReference>
<dbReference type="GeneTree" id="ENSGT00390000013227"/>
<dbReference type="HOGENOM" id="CLU_008681_3_1_1"/>
<dbReference type="InParanoid" id="Q3V384"/>
<dbReference type="OMA" id="ARRFINM"/>
<dbReference type="OrthoDB" id="548867at2759"/>
<dbReference type="PhylomeDB" id="Q3V384"/>
<dbReference type="TreeFam" id="TF314551"/>
<dbReference type="BioGRID-ORCS" id="215951">
    <property type="hits" value="1 hit in 76 CRISPR screens"/>
</dbReference>
<dbReference type="ChiTaRS" id="Lace1">
    <property type="organism name" value="mouse"/>
</dbReference>
<dbReference type="PRO" id="PR:Q3V384"/>
<dbReference type="Proteomes" id="UP000000589">
    <property type="component" value="Chromosome 10"/>
</dbReference>
<dbReference type="RNAct" id="Q3V384">
    <property type="molecule type" value="protein"/>
</dbReference>
<dbReference type="Bgee" id="ENSMUSG00000038302">
    <property type="expression patterns" value="Expressed in interventricular septum and 217 other cell types or tissues"/>
</dbReference>
<dbReference type="ExpressionAtlas" id="Q3V384">
    <property type="expression patterns" value="baseline and differential"/>
</dbReference>
<dbReference type="GO" id="GO:0031966">
    <property type="term" value="C:mitochondrial membrane"/>
    <property type="evidence" value="ECO:0000250"/>
    <property type="project" value="UniProtKB"/>
</dbReference>
<dbReference type="GO" id="GO:0005739">
    <property type="term" value="C:mitochondrion"/>
    <property type="evidence" value="ECO:0007005"/>
    <property type="project" value="MGI"/>
</dbReference>
<dbReference type="GO" id="GO:0005524">
    <property type="term" value="F:ATP binding"/>
    <property type="evidence" value="ECO:0007669"/>
    <property type="project" value="UniProtKB-KW"/>
</dbReference>
<dbReference type="GO" id="GO:0016887">
    <property type="term" value="F:ATP hydrolysis activity"/>
    <property type="evidence" value="ECO:0007669"/>
    <property type="project" value="InterPro"/>
</dbReference>
<dbReference type="GO" id="GO:0035694">
    <property type="term" value="P:mitochondrial protein catabolic process"/>
    <property type="evidence" value="ECO:0007669"/>
    <property type="project" value="Ensembl"/>
</dbReference>
<dbReference type="GO" id="GO:0141164">
    <property type="term" value="P:mitochondrial protein quality control"/>
    <property type="evidence" value="ECO:0007669"/>
    <property type="project" value="Ensembl"/>
</dbReference>
<dbReference type="FunFam" id="3.40.50.300:FF:000735">
    <property type="entry name" value="Lactation elevated 1 (Predicted)"/>
    <property type="match status" value="1"/>
</dbReference>
<dbReference type="Gene3D" id="3.40.50.300">
    <property type="entry name" value="P-loop containing nucleotide triphosphate hydrolases"/>
    <property type="match status" value="1"/>
</dbReference>
<dbReference type="InterPro" id="IPR005654">
    <property type="entry name" value="ATPase_AFG1-like"/>
</dbReference>
<dbReference type="InterPro" id="IPR027417">
    <property type="entry name" value="P-loop_NTPase"/>
</dbReference>
<dbReference type="NCBIfam" id="NF040713">
    <property type="entry name" value="ZapE"/>
    <property type="match status" value="1"/>
</dbReference>
<dbReference type="PANTHER" id="PTHR12169:SF6">
    <property type="entry name" value="AFG1-LIKE ATPASE"/>
    <property type="match status" value="1"/>
</dbReference>
<dbReference type="PANTHER" id="PTHR12169">
    <property type="entry name" value="ATPASE N2B"/>
    <property type="match status" value="1"/>
</dbReference>
<dbReference type="Pfam" id="PF03969">
    <property type="entry name" value="AFG1_ATPase"/>
    <property type="match status" value="1"/>
</dbReference>
<dbReference type="SUPFAM" id="SSF52540">
    <property type="entry name" value="P-loop containing nucleoside triphosphate hydrolases"/>
    <property type="match status" value="1"/>
</dbReference>
<accession>Q3V384</accession>
<accession>Q5EBH5</accession>
<accession>Q8K1E9</accession>
<organism>
    <name type="scientific">Mus musculus</name>
    <name type="common">Mouse</name>
    <dbReference type="NCBI Taxonomy" id="10090"/>
    <lineage>
        <taxon>Eukaryota</taxon>
        <taxon>Metazoa</taxon>
        <taxon>Chordata</taxon>
        <taxon>Craniata</taxon>
        <taxon>Vertebrata</taxon>
        <taxon>Euteleostomi</taxon>
        <taxon>Mammalia</taxon>
        <taxon>Eutheria</taxon>
        <taxon>Euarchontoglires</taxon>
        <taxon>Glires</taxon>
        <taxon>Rodentia</taxon>
        <taxon>Myomorpha</taxon>
        <taxon>Muroidea</taxon>
        <taxon>Muridae</taxon>
        <taxon>Murinae</taxon>
        <taxon>Mus</taxon>
        <taxon>Mus</taxon>
    </lineage>
</organism>
<protein>
    <recommendedName>
        <fullName evidence="5">AFG1-like ATPase</fullName>
        <ecNumber evidence="4">3.6.-.-</ecNumber>
    </recommendedName>
    <alternativeName>
        <fullName evidence="3">Lactation elevated protein 1</fullName>
    </alternativeName>
</protein>
<keyword id="KW-0067">ATP-binding</keyword>
<keyword id="KW-0378">Hydrolase</keyword>
<keyword id="KW-0472">Membrane</keyword>
<keyword id="KW-0496">Mitochondrion</keyword>
<keyword id="KW-0547">Nucleotide-binding</keyword>
<keyword id="KW-1185">Reference proteome</keyword>
<comment type="function">
    <text evidence="1">Putative mitochondrial ATPase. Plays a role in mitochondrial morphology and mitochondrial protein metabolism. Promotes degradation of excess nuclear-encoded complex IV subunits (COX4I1, COX5A and COX6A1) and normal activity of complexes III and IV of the respiratory chain. Mediates mitochondrial translocation of TP53 and its transcription-independent apoptosis in response to genotoxic stress.</text>
</comment>
<comment type="subunit">
    <text evidence="1">Found in several complexes of 140-500 kDa. Interacts with YME1L1. Interacts with COX4I1. Interacts with COX5A. Interacts with TP53; mediates mitochondrial translocation of TP53 in response to genotoxic stress such as mitomycin C treatment.</text>
</comment>
<comment type="subcellular location">
    <subcellularLocation>
        <location evidence="1">Mitochondrion membrane</location>
    </subcellularLocation>
</comment>
<comment type="tissue specificity">
    <text evidence="2">Highly expressed in heart, kidney, and lactating breast. Present at reduced levels in virgin, pregnant, and involuting breast.</text>
</comment>
<comment type="developmental stage">
    <text evidence="2">Expression is elevated during lactation.</text>
</comment>
<comment type="similarity">
    <text evidence="4">Belongs to the AFG1 ATPase family.</text>
</comment>
<sequence length="480" mass="54313">MAASWSPLVTLRSAARSRLTGRGVGCGARVVAIPPPAPGPGKPLWKAYTVQTSEGVRPTAASEARLKALAVCHGPLDHYDFLIKSQELREDEHQRRVVQCLQKLQEDLKGYSIEEGGLFSKLFSRNKPPKGLYVYGDVGTGKTMVMDMFYAYVETKRKKRVHFHGFMLDVHRRIHHLKQSLPKRKAGFMAKSYDPIAPIAEEISQETSLLCFDEFQVTDIADAMILKQLFENLFKNGVVVVATSNRPPEDLYKNGLQRANFVPFIAVLKEYCDTLQLDSGVDYRKRELAPAGKLYYLTSEADVEAVVDKLFDELAQKQNDLTSPRILKVQGRELRLNKACGSVADCTFEELCERPLGASDYLELSKNFDTVIIRNIPQFSLAKRTQARRFITLIDNFYDFKVRIICSASAPISSLFLHQHQDSESDQSRILMDDLGLSQDSAGLSMFTGEEEIFAFQRTISRLTEMQTEQYWIEGDRSRK</sequence>
<reference key="1">
    <citation type="journal article" date="2002" name="Genomics">
        <title>Novel vertebrate genes and putative regulatory elements identified at kidney disease and NR2E1/fierce loci.</title>
        <authorList>
            <person name="Abrahams B.S."/>
            <person name="Mak G.M."/>
            <person name="Berry M.L."/>
            <person name="Palmquist D.L."/>
            <person name="Saionz J.R."/>
            <person name="Tay A."/>
            <person name="Tan Y.H."/>
            <person name="Brenner S."/>
            <person name="Simpson E.M."/>
            <person name="Venkatesh B."/>
        </authorList>
    </citation>
    <scope>NUCLEOTIDE SEQUENCE [MRNA]</scope>
    <scope>TISSUE SPECIFICITY</scope>
    <scope>DEVELOPMENTAL STAGE</scope>
    <source>
        <strain>C57BL/6J</strain>
    </source>
</reference>
<reference key="2">
    <citation type="journal article" date="2005" name="Science">
        <title>The transcriptional landscape of the mammalian genome.</title>
        <authorList>
            <person name="Carninci P."/>
            <person name="Kasukawa T."/>
            <person name="Katayama S."/>
            <person name="Gough J."/>
            <person name="Frith M.C."/>
            <person name="Maeda N."/>
            <person name="Oyama R."/>
            <person name="Ravasi T."/>
            <person name="Lenhard B."/>
            <person name="Wells C."/>
            <person name="Kodzius R."/>
            <person name="Shimokawa K."/>
            <person name="Bajic V.B."/>
            <person name="Brenner S.E."/>
            <person name="Batalov S."/>
            <person name="Forrest A.R."/>
            <person name="Zavolan M."/>
            <person name="Davis M.J."/>
            <person name="Wilming L.G."/>
            <person name="Aidinis V."/>
            <person name="Allen J.E."/>
            <person name="Ambesi-Impiombato A."/>
            <person name="Apweiler R."/>
            <person name="Aturaliya R.N."/>
            <person name="Bailey T.L."/>
            <person name="Bansal M."/>
            <person name="Baxter L."/>
            <person name="Beisel K.W."/>
            <person name="Bersano T."/>
            <person name="Bono H."/>
            <person name="Chalk A.M."/>
            <person name="Chiu K.P."/>
            <person name="Choudhary V."/>
            <person name="Christoffels A."/>
            <person name="Clutterbuck D.R."/>
            <person name="Crowe M.L."/>
            <person name="Dalla E."/>
            <person name="Dalrymple B.P."/>
            <person name="de Bono B."/>
            <person name="Della Gatta G."/>
            <person name="di Bernardo D."/>
            <person name="Down T."/>
            <person name="Engstrom P."/>
            <person name="Fagiolini M."/>
            <person name="Faulkner G."/>
            <person name="Fletcher C.F."/>
            <person name="Fukushima T."/>
            <person name="Furuno M."/>
            <person name="Futaki S."/>
            <person name="Gariboldi M."/>
            <person name="Georgii-Hemming P."/>
            <person name="Gingeras T.R."/>
            <person name="Gojobori T."/>
            <person name="Green R.E."/>
            <person name="Gustincich S."/>
            <person name="Harbers M."/>
            <person name="Hayashi Y."/>
            <person name="Hensch T.K."/>
            <person name="Hirokawa N."/>
            <person name="Hill D."/>
            <person name="Huminiecki L."/>
            <person name="Iacono M."/>
            <person name="Ikeo K."/>
            <person name="Iwama A."/>
            <person name="Ishikawa T."/>
            <person name="Jakt M."/>
            <person name="Kanapin A."/>
            <person name="Katoh M."/>
            <person name="Kawasawa Y."/>
            <person name="Kelso J."/>
            <person name="Kitamura H."/>
            <person name="Kitano H."/>
            <person name="Kollias G."/>
            <person name="Krishnan S.P."/>
            <person name="Kruger A."/>
            <person name="Kummerfeld S.K."/>
            <person name="Kurochkin I.V."/>
            <person name="Lareau L.F."/>
            <person name="Lazarevic D."/>
            <person name="Lipovich L."/>
            <person name="Liu J."/>
            <person name="Liuni S."/>
            <person name="McWilliam S."/>
            <person name="Madan Babu M."/>
            <person name="Madera M."/>
            <person name="Marchionni L."/>
            <person name="Matsuda H."/>
            <person name="Matsuzawa S."/>
            <person name="Miki H."/>
            <person name="Mignone F."/>
            <person name="Miyake S."/>
            <person name="Morris K."/>
            <person name="Mottagui-Tabar S."/>
            <person name="Mulder N."/>
            <person name="Nakano N."/>
            <person name="Nakauchi H."/>
            <person name="Ng P."/>
            <person name="Nilsson R."/>
            <person name="Nishiguchi S."/>
            <person name="Nishikawa S."/>
            <person name="Nori F."/>
            <person name="Ohara O."/>
            <person name="Okazaki Y."/>
            <person name="Orlando V."/>
            <person name="Pang K.C."/>
            <person name="Pavan W.J."/>
            <person name="Pavesi G."/>
            <person name="Pesole G."/>
            <person name="Petrovsky N."/>
            <person name="Piazza S."/>
            <person name="Reed J."/>
            <person name="Reid J.F."/>
            <person name="Ring B.Z."/>
            <person name="Ringwald M."/>
            <person name="Rost B."/>
            <person name="Ruan Y."/>
            <person name="Salzberg S.L."/>
            <person name="Sandelin A."/>
            <person name="Schneider C."/>
            <person name="Schoenbach C."/>
            <person name="Sekiguchi K."/>
            <person name="Semple C.A."/>
            <person name="Seno S."/>
            <person name="Sessa L."/>
            <person name="Sheng Y."/>
            <person name="Shibata Y."/>
            <person name="Shimada H."/>
            <person name="Shimada K."/>
            <person name="Silva D."/>
            <person name="Sinclair B."/>
            <person name="Sperling S."/>
            <person name="Stupka E."/>
            <person name="Sugiura K."/>
            <person name="Sultana R."/>
            <person name="Takenaka Y."/>
            <person name="Taki K."/>
            <person name="Tammoja K."/>
            <person name="Tan S.L."/>
            <person name="Tang S."/>
            <person name="Taylor M.S."/>
            <person name="Tegner J."/>
            <person name="Teichmann S.A."/>
            <person name="Ueda H.R."/>
            <person name="van Nimwegen E."/>
            <person name="Verardo R."/>
            <person name="Wei C.L."/>
            <person name="Yagi K."/>
            <person name="Yamanishi H."/>
            <person name="Zabarovsky E."/>
            <person name="Zhu S."/>
            <person name="Zimmer A."/>
            <person name="Hide W."/>
            <person name="Bult C."/>
            <person name="Grimmond S.M."/>
            <person name="Teasdale R.D."/>
            <person name="Liu E.T."/>
            <person name="Brusic V."/>
            <person name="Quackenbush J."/>
            <person name="Wahlestedt C."/>
            <person name="Mattick J.S."/>
            <person name="Hume D.A."/>
            <person name="Kai C."/>
            <person name="Sasaki D."/>
            <person name="Tomaru Y."/>
            <person name="Fukuda S."/>
            <person name="Kanamori-Katayama M."/>
            <person name="Suzuki M."/>
            <person name="Aoki J."/>
            <person name="Arakawa T."/>
            <person name="Iida J."/>
            <person name="Imamura K."/>
            <person name="Itoh M."/>
            <person name="Kato T."/>
            <person name="Kawaji H."/>
            <person name="Kawagashira N."/>
            <person name="Kawashima T."/>
            <person name="Kojima M."/>
            <person name="Kondo S."/>
            <person name="Konno H."/>
            <person name="Nakano K."/>
            <person name="Ninomiya N."/>
            <person name="Nishio T."/>
            <person name="Okada M."/>
            <person name="Plessy C."/>
            <person name="Shibata K."/>
            <person name="Shiraki T."/>
            <person name="Suzuki S."/>
            <person name="Tagami M."/>
            <person name="Waki K."/>
            <person name="Watahiki A."/>
            <person name="Okamura-Oho Y."/>
            <person name="Suzuki H."/>
            <person name="Kawai J."/>
            <person name="Hayashizaki Y."/>
        </authorList>
    </citation>
    <scope>NUCLEOTIDE SEQUENCE [LARGE SCALE MRNA]</scope>
    <source>
        <strain>C57BL/6J</strain>
        <tissue>Retina</tissue>
    </source>
</reference>
<reference key="3">
    <citation type="journal article" date="2004" name="Genome Res.">
        <title>The status, quality, and expansion of the NIH full-length cDNA project: the Mammalian Gene Collection (MGC).</title>
        <authorList>
            <consortium name="The MGC Project Team"/>
        </authorList>
    </citation>
    <scope>NUCLEOTIDE SEQUENCE [LARGE SCALE MRNA]</scope>
    <source>
        <tissue>Kidney</tissue>
    </source>
</reference>
<reference key="4">
    <citation type="journal article" date="2010" name="Cell">
        <title>A tissue-specific atlas of mouse protein phosphorylation and expression.</title>
        <authorList>
            <person name="Huttlin E.L."/>
            <person name="Jedrychowski M.P."/>
            <person name="Elias J.E."/>
            <person name="Goswami T."/>
            <person name="Rad R."/>
            <person name="Beausoleil S.A."/>
            <person name="Villen J."/>
            <person name="Haas W."/>
            <person name="Sowa M.E."/>
            <person name="Gygi S.P."/>
        </authorList>
    </citation>
    <scope>IDENTIFICATION BY MASS SPECTROMETRY [LARGE SCALE ANALYSIS]</scope>
    <source>
        <tissue>Brown adipose tissue</tissue>
        <tissue>Heart</tissue>
        <tissue>Kidney</tissue>
    </source>
</reference>
<gene>
    <name evidence="5" type="primary">Afg1l</name>
    <name evidence="3" type="synonym">Lace1</name>
</gene>
<feature type="chain" id="PRO_0000279522" description="AFG1-like ATPase">
    <location>
        <begin position="1"/>
        <end position="480"/>
    </location>
</feature>
<feature type="binding site" evidence="1">
    <location>
        <begin position="136"/>
        <end position="143"/>
    </location>
    <ligand>
        <name>ATP</name>
        <dbReference type="ChEBI" id="CHEBI:30616"/>
    </ligand>
</feature>
<feature type="binding site" evidence="1">
    <location>
        <begin position="209"/>
        <end position="214"/>
    </location>
    <ligand>
        <name>ATP</name>
        <dbReference type="ChEBI" id="CHEBI:30616"/>
    </ligand>
</feature>
<feature type="sequence conflict" description="In Ref. 3; AAH89595." evidence="4" ref="3">
    <original>V</original>
    <variation>M</variation>
    <location>
        <position position="329"/>
    </location>
</feature>